<gene>
    <name evidence="1" type="primary">thrS</name>
    <name type="ordered locus">Mmwyl1_2597</name>
</gene>
<dbReference type="EC" id="6.1.1.3" evidence="1"/>
<dbReference type="EMBL" id="CP000749">
    <property type="protein sequence ID" value="ABR71510.1"/>
    <property type="molecule type" value="Genomic_DNA"/>
</dbReference>
<dbReference type="SMR" id="A6VYI1"/>
<dbReference type="STRING" id="400668.Mmwyl1_2597"/>
<dbReference type="KEGG" id="mmw:Mmwyl1_2597"/>
<dbReference type="eggNOG" id="COG0441">
    <property type="taxonomic scope" value="Bacteria"/>
</dbReference>
<dbReference type="HOGENOM" id="CLU_008554_0_1_6"/>
<dbReference type="OrthoDB" id="9802304at2"/>
<dbReference type="GO" id="GO:0005829">
    <property type="term" value="C:cytosol"/>
    <property type="evidence" value="ECO:0007669"/>
    <property type="project" value="TreeGrafter"/>
</dbReference>
<dbReference type="GO" id="GO:0005524">
    <property type="term" value="F:ATP binding"/>
    <property type="evidence" value="ECO:0007669"/>
    <property type="project" value="UniProtKB-UniRule"/>
</dbReference>
<dbReference type="GO" id="GO:0046872">
    <property type="term" value="F:metal ion binding"/>
    <property type="evidence" value="ECO:0007669"/>
    <property type="project" value="UniProtKB-KW"/>
</dbReference>
<dbReference type="GO" id="GO:0004829">
    <property type="term" value="F:threonine-tRNA ligase activity"/>
    <property type="evidence" value="ECO:0007669"/>
    <property type="project" value="UniProtKB-UniRule"/>
</dbReference>
<dbReference type="GO" id="GO:0000049">
    <property type="term" value="F:tRNA binding"/>
    <property type="evidence" value="ECO:0007669"/>
    <property type="project" value="UniProtKB-KW"/>
</dbReference>
<dbReference type="GO" id="GO:0006435">
    <property type="term" value="P:threonyl-tRNA aminoacylation"/>
    <property type="evidence" value="ECO:0007669"/>
    <property type="project" value="UniProtKB-UniRule"/>
</dbReference>
<dbReference type="CDD" id="cd01667">
    <property type="entry name" value="TGS_ThrRS"/>
    <property type="match status" value="1"/>
</dbReference>
<dbReference type="CDD" id="cd00860">
    <property type="entry name" value="ThrRS_anticodon"/>
    <property type="match status" value="1"/>
</dbReference>
<dbReference type="CDD" id="cd00771">
    <property type="entry name" value="ThrRS_core"/>
    <property type="match status" value="1"/>
</dbReference>
<dbReference type="FunFam" id="3.10.20.30:FF:000005">
    <property type="entry name" value="Threonine--tRNA ligase"/>
    <property type="match status" value="1"/>
</dbReference>
<dbReference type="FunFam" id="3.30.54.20:FF:000002">
    <property type="entry name" value="Threonine--tRNA ligase"/>
    <property type="match status" value="1"/>
</dbReference>
<dbReference type="FunFam" id="3.30.930.10:FF:000002">
    <property type="entry name" value="Threonine--tRNA ligase"/>
    <property type="match status" value="1"/>
</dbReference>
<dbReference type="FunFam" id="3.40.50.800:FF:000001">
    <property type="entry name" value="Threonine--tRNA ligase"/>
    <property type="match status" value="1"/>
</dbReference>
<dbReference type="FunFam" id="3.30.980.10:FF:000005">
    <property type="entry name" value="Threonyl-tRNA synthetase, mitochondrial"/>
    <property type="match status" value="1"/>
</dbReference>
<dbReference type="Gene3D" id="3.10.20.30">
    <property type="match status" value="1"/>
</dbReference>
<dbReference type="Gene3D" id="3.30.54.20">
    <property type="match status" value="1"/>
</dbReference>
<dbReference type="Gene3D" id="3.40.50.800">
    <property type="entry name" value="Anticodon-binding domain"/>
    <property type="match status" value="1"/>
</dbReference>
<dbReference type="Gene3D" id="3.30.930.10">
    <property type="entry name" value="Bira Bifunctional Protein, Domain 2"/>
    <property type="match status" value="1"/>
</dbReference>
<dbReference type="Gene3D" id="3.30.980.10">
    <property type="entry name" value="Threonyl-trna Synthetase, Chain A, domain 2"/>
    <property type="match status" value="1"/>
</dbReference>
<dbReference type="HAMAP" id="MF_00184">
    <property type="entry name" value="Thr_tRNA_synth"/>
    <property type="match status" value="1"/>
</dbReference>
<dbReference type="InterPro" id="IPR002314">
    <property type="entry name" value="aa-tRNA-synt_IIb"/>
</dbReference>
<dbReference type="InterPro" id="IPR006195">
    <property type="entry name" value="aa-tRNA-synth_II"/>
</dbReference>
<dbReference type="InterPro" id="IPR045864">
    <property type="entry name" value="aa-tRNA-synth_II/BPL/LPL"/>
</dbReference>
<dbReference type="InterPro" id="IPR004154">
    <property type="entry name" value="Anticodon-bd"/>
</dbReference>
<dbReference type="InterPro" id="IPR036621">
    <property type="entry name" value="Anticodon-bd_dom_sf"/>
</dbReference>
<dbReference type="InterPro" id="IPR012675">
    <property type="entry name" value="Beta-grasp_dom_sf"/>
</dbReference>
<dbReference type="InterPro" id="IPR004095">
    <property type="entry name" value="TGS"/>
</dbReference>
<dbReference type="InterPro" id="IPR012676">
    <property type="entry name" value="TGS-like"/>
</dbReference>
<dbReference type="InterPro" id="IPR002320">
    <property type="entry name" value="Thr-tRNA-ligase_IIa"/>
</dbReference>
<dbReference type="InterPro" id="IPR018163">
    <property type="entry name" value="Thr/Ala-tRNA-synth_IIc_edit"/>
</dbReference>
<dbReference type="InterPro" id="IPR047246">
    <property type="entry name" value="ThrRS_anticodon"/>
</dbReference>
<dbReference type="InterPro" id="IPR033728">
    <property type="entry name" value="ThrRS_core"/>
</dbReference>
<dbReference type="InterPro" id="IPR012947">
    <property type="entry name" value="tRNA_SAD"/>
</dbReference>
<dbReference type="NCBIfam" id="TIGR00418">
    <property type="entry name" value="thrS"/>
    <property type="match status" value="1"/>
</dbReference>
<dbReference type="PANTHER" id="PTHR11451:SF44">
    <property type="entry name" value="THREONINE--TRNA LIGASE, CHLOROPLASTIC_MITOCHONDRIAL 2"/>
    <property type="match status" value="1"/>
</dbReference>
<dbReference type="PANTHER" id="PTHR11451">
    <property type="entry name" value="THREONINE-TRNA LIGASE"/>
    <property type="match status" value="1"/>
</dbReference>
<dbReference type="Pfam" id="PF03129">
    <property type="entry name" value="HGTP_anticodon"/>
    <property type="match status" value="1"/>
</dbReference>
<dbReference type="Pfam" id="PF02824">
    <property type="entry name" value="TGS"/>
    <property type="match status" value="1"/>
</dbReference>
<dbReference type="Pfam" id="PF00587">
    <property type="entry name" value="tRNA-synt_2b"/>
    <property type="match status" value="1"/>
</dbReference>
<dbReference type="Pfam" id="PF07973">
    <property type="entry name" value="tRNA_SAD"/>
    <property type="match status" value="1"/>
</dbReference>
<dbReference type="PRINTS" id="PR01047">
    <property type="entry name" value="TRNASYNTHTHR"/>
</dbReference>
<dbReference type="SMART" id="SM00863">
    <property type="entry name" value="tRNA_SAD"/>
    <property type="match status" value="1"/>
</dbReference>
<dbReference type="SUPFAM" id="SSF52954">
    <property type="entry name" value="Class II aaRS ABD-related"/>
    <property type="match status" value="1"/>
</dbReference>
<dbReference type="SUPFAM" id="SSF55681">
    <property type="entry name" value="Class II aaRS and biotin synthetases"/>
    <property type="match status" value="1"/>
</dbReference>
<dbReference type="SUPFAM" id="SSF81271">
    <property type="entry name" value="TGS-like"/>
    <property type="match status" value="1"/>
</dbReference>
<dbReference type="SUPFAM" id="SSF55186">
    <property type="entry name" value="ThrRS/AlaRS common domain"/>
    <property type="match status" value="1"/>
</dbReference>
<dbReference type="PROSITE" id="PS50862">
    <property type="entry name" value="AA_TRNA_LIGASE_II"/>
    <property type="match status" value="1"/>
</dbReference>
<dbReference type="PROSITE" id="PS51880">
    <property type="entry name" value="TGS"/>
    <property type="match status" value="1"/>
</dbReference>
<sequence length="645" mass="73892">MPVITLPDGSQRSFSNPVTVMQVAEDIGPGLAKATVAGRIDGQLVDACELISDDAKLSIITGKDPEGVEIIRHSFAHLVGHAVKQLYPTAQMAIGPVIDEGFYYDIAYERPFTPDDLAAIEKRIAELVKTDYDVVKRMTPIAEARQQFVDRGESYKVALIDDMDESTKEVGLYYHEEYMDMCRGPHVPNTRVLRHFKLMKLAGAYWRGDSNNEMLQRIYGTAWNDKKELKGYLTRIEEAEKRDHRKLGKKLDLFHVQEEAPGMVFWHPKGWRLYQAVEQYMRQKQLDNNYQEVKTPQIVDRVLWEKSGHWGKYHENMFTTHSENRDYAVKPMNCPCHIQVYNQGLKSYRDLPFRMAEFGSCHRNEPSGALHGIMRVRNFVQDDGHIFVTEGQIQQEVSEFIDLLHEVYADFGFDNIVYRLSTRPEQRVGSDEVWDKAEKALSEALDSAGLDWEELPGEGAFYGPKIEFSLKDAIGRVWQCGTIQVDFSMPTRLGAQYVSEDGSRQTPVMLHRAIVGSLERFIGILIEDTEGAFPVWLAPEQVVIMNITDRQADYCSVLEKRLNSNGFRAKLDLRNEKIGFKIREHTLQRVPYMIVVGDKEVEQEQVAVRTRTGEDLGVMSISDFEGLLQQEIARRSRKQEVEIVL</sequence>
<keyword id="KW-0030">Aminoacyl-tRNA synthetase</keyword>
<keyword id="KW-0067">ATP-binding</keyword>
<keyword id="KW-0963">Cytoplasm</keyword>
<keyword id="KW-0436">Ligase</keyword>
<keyword id="KW-0479">Metal-binding</keyword>
<keyword id="KW-0547">Nucleotide-binding</keyword>
<keyword id="KW-0648">Protein biosynthesis</keyword>
<keyword id="KW-0694">RNA-binding</keyword>
<keyword id="KW-0820">tRNA-binding</keyword>
<keyword id="KW-0862">Zinc</keyword>
<organism>
    <name type="scientific">Marinomonas sp. (strain MWYL1)</name>
    <dbReference type="NCBI Taxonomy" id="400668"/>
    <lineage>
        <taxon>Bacteria</taxon>
        <taxon>Pseudomonadati</taxon>
        <taxon>Pseudomonadota</taxon>
        <taxon>Gammaproteobacteria</taxon>
        <taxon>Oceanospirillales</taxon>
        <taxon>Oceanospirillaceae</taxon>
        <taxon>Marinomonas</taxon>
    </lineage>
</organism>
<accession>A6VYI1</accession>
<protein>
    <recommendedName>
        <fullName evidence="1">Threonine--tRNA ligase</fullName>
        <ecNumber evidence="1">6.1.1.3</ecNumber>
    </recommendedName>
    <alternativeName>
        <fullName evidence="1">Threonyl-tRNA synthetase</fullName>
        <shortName evidence="1">ThrRS</shortName>
    </alternativeName>
</protein>
<reference key="1">
    <citation type="submission" date="2007-06" db="EMBL/GenBank/DDBJ databases">
        <title>Complete sequence of Marinomonas sp. MWYL1.</title>
        <authorList>
            <consortium name="US DOE Joint Genome Institute"/>
            <person name="Copeland A."/>
            <person name="Lucas S."/>
            <person name="Lapidus A."/>
            <person name="Barry K."/>
            <person name="Glavina del Rio T."/>
            <person name="Dalin E."/>
            <person name="Tice H."/>
            <person name="Pitluck S."/>
            <person name="Kiss H."/>
            <person name="Brettin T."/>
            <person name="Bruce D."/>
            <person name="Detter J.C."/>
            <person name="Han C."/>
            <person name="Schmutz J."/>
            <person name="Larimer F."/>
            <person name="Land M."/>
            <person name="Hauser L."/>
            <person name="Kyrpides N."/>
            <person name="Kim E."/>
            <person name="Johnston A.W.B."/>
            <person name="Todd J.D."/>
            <person name="Rogers R."/>
            <person name="Wexler M."/>
            <person name="Bond P.L."/>
            <person name="Li Y."/>
            <person name="Richardson P."/>
        </authorList>
    </citation>
    <scope>NUCLEOTIDE SEQUENCE [LARGE SCALE GENOMIC DNA]</scope>
    <source>
        <strain>MWYL1</strain>
    </source>
</reference>
<feature type="chain" id="PRO_1000077363" description="Threonine--tRNA ligase">
    <location>
        <begin position="1"/>
        <end position="645"/>
    </location>
</feature>
<feature type="domain" description="TGS" evidence="2">
    <location>
        <begin position="1"/>
        <end position="61"/>
    </location>
</feature>
<feature type="region of interest" description="Catalytic" evidence="1">
    <location>
        <begin position="243"/>
        <end position="534"/>
    </location>
</feature>
<feature type="binding site" evidence="1">
    <location>
        <position position="334"/>
    </location>
    <ligand>
        <name>Zn(2+)</name>
        <dbReference type="ChEBI" id="CHEBI:29105"/>
    </ligand>
</feature>
<feature type="binding site" evidence="1">
    <location>
        <position position="385"/>
    </location>
    <ligand>
        <name>Zn(2+)</name>
        <dbReference type="ChEBI" id="CHEBI:29105"/>
    </ligand>
</feature>
<feature type="binding site" evidence="1">
    <location>
        <position position="511"/>
    </location>
    <ligand>
        <name>Zn(2+)</name>
        <dbReference type="ChEBI" id="CHEBI:29105"/>
    </ligand>
</feature>
<proteinExistence type="inferred from homology"/>
<evidence type="ECO:0000255" key="1">
    <source>
        <dbReference type="HAMAP-Rule" id="MF_00184"/>
    </source>
</evidence>
<evidence type="ECO:0000255" key="2">
    <source>
        <dbReference type="PROSITE-ProRule" id="PRU01228"/>
    </source>
</evidence>
<name>SYT_MARMS</name>
<comment type="function">
    <text evidence="1">Catalyzes the attachment of threonine to tRNA(Thr) in a two-step reaction: L-threonine is first activated by ATP to form Thr-AMP and then transferred to the acceptor end of tRNA(Thr). Also edits incorrectly charged L-seryl-tRNA(Thr).</text>
</comment>
<comment type="catalytic activity">
    <reaction evidence="1">
        <text>tRNA(Thr) + L-threonine + ATP = L-threonyl-tRNA(Thr) + AMP + diphosphate + H(+)</text>
        <dbReference type="Rhea" id="RHEA:24624"/>
        <dbReference type="Rhea" id="RHEA-COMP:9670"/>
        <dbReference type="Rhea" id="RHEA-COMP:9704"/>
        <dbReference type="ChEBI" id="CHEBI:15378"/>
        <dbReference type="ChEBI" id="CHEBI:30616"/>
        <dbReference type="ChEBI" id="CHEBI:33019"/>
        <dbReference type="ChEBI" id="CHEBI:57926"/>
        <dbReference type="ChEBI" id="CHEBI:78442"/>
        <dbReference type="ChEBI" id="CHEBI:78534"/>
        <dbReference type="ChEBI" id="CHEBI:456215"/>
        <dbReference type="EC" id="6.1.1.3"/>
    </reaction>
</comment>
<comment type="cofactor">
    <cofactor evidence="1">
        <name>Zn(2+)</name>
        <dbReference type="ChEBI" id="CHEBI:29105"/>
    </cofactor>
    <text evidence="1">Binds 1 zinc ion per subunit.</text>
</comment>
<comment type="subunit">
    <text evidence="1">Homodimer.</text>
</comment>
<comment type="subcellular location">
    <subcellularLocation>
        <location evidence="1">Cytoplasm</location>
    </subcellularLocation>
</comment>
<comment type="similarity">
    <text evidence="1">Belongs to the class-II aminoacyl-tRNA synthetase family.</text>
</comment>